<gene>
    <name type="primary">APEH</name>
</gene>
<comment type="function">
    <text evidence="1 2">This enzyme catalyzes the hydrolysis of the N-terminal peptide bond of an N-acetylated peptide to generate an N-acetylated amino acid and a peptide with a free N-terminus (By similarity). It preferentially cleaves off Ac-Ala, Ac-Met and Ac-Ser (By similarity). Also, involved in the degradation of oxidized and glycated proteins (By similarity).</text>
</comment>
<comment type="catalytic activity">
    <reaction evidence="1">
        <text>Cleavage of an N-acetyl or N-formyl amino acid from the N-terminus of a polypeptide.</text>
        <dbReference type="EC" id="3.4.19.1"/>
    </reaction>
</comment>
<comment type="activity regulation">
    <text evidence="8">Homotetramerization is required for activity (Probable). Tetramerization results in the formation of a gated channel which is involved in substrate selection and substrate access to the catalytic sites (Probable).</text>
</comment>
<comment type="subunit">
    <text evidence="5">Homotetramer.</text>
</comment>
<comment type="subcellular location">
    <subcellularLocation>
        <location evidence="2">Cytoplasm</location>
    </subcellularLocation>
</comment>
<comment type="tissue specificity">
    <text evidence="5">Expressed in the liver (at protein level).</text>
</comment>
<comment type="similarity">
    <text evidence="7">Belongs to the peptidase S9C family.</text>
</comment>
<name>ACPH_PIG</name>
<sequence length="732" mass="81244">MERQVLLSEPEEAAALYRGLSRQPALSAACLGPEVTTQYGGRYRTVHTEWTQRDLERMENIRFCRQYLVFHDGDSVVFAGPAGNSVETRGELLSRESPSGTMKAVLRKAGGTGTAEEKQFLEVWEKNRKLKSFNLSALEKHGPVYEDDCFGCLSWSHSETHLLYVADKKRPKAESFFQTKALDVTGSDDEMARTKKPDQAIKGDQFLFYEDWGENMVSKSTPVLCVLDIESGNISVLEGVPESVSPGQAFWAPGDTGVVFVGWWHEPFRLGIRFCTNRRSALYYVDLTGGKCELLSDESVAVTSPRLSPDQCRIVYLRFPSLVPHQQCGQLCLYDWYTRVTSVVVDIVPRQLGEDFSGIYCSLLPLGCWSADSQRVVFDSPQRSRQDLFAVDTQMGSVTSLTAGGSGGSWKLLTIDRDLMVVQFSTPSVPPSLKVGFLPPAGKEQAVSWVSLEEAEPFPDISWSIRVLQPPPQQEHVQYAGLDFEAILLQPSNSPEKTQVPMVVMPHGGPHSSFVTAWMLFPAMLCKMGFAVLLVNYRGSTGFGQDSILSLPGNVGHQDVKDVQFAVEQVLQEEHFDAGRVALMGGSHGGFLSCHLIGQYPETYSACVVRNPVINIASMMGSTDIPDWCMVEAGFSYSSDCLPDLSVWAAMLDKSPIKYAPQVKTPLLLMLGQEDRRVPFKQGMEYYRVLKARNVPVRLLLYPKSTHALSEVEVESDSFMNAVLWLCTHLGS</sequence>
<evidence type="ECO:0000250" key="1">
    <source>
        <dbReference type="UniProtKB" id="P13676"/>
    </source>
</evidence>
<evidence type="ECO:0000250" key="2">
    <source>
        <dbReference type="UniProtKB" id="P13798"/>
    </source>
</evidence>
<evidence type="ECO:0000255" key="3">
    <source>
        <dbReference type="PROSITE-ProRule" id="PRU10084"/>
    </source>
</evidence>
<evidence type="ECO:0000269" key="4">
    <source>
    </source>
</evidence>
<evidence type="ECO:0000269" key="5">
    <source>
    </source>
</evidence>
<evidence type="ECO:0000269" key="6">
    <source>
    </source>
</evidence>
<evidence type="ECO:0000305" key="7"/>
<evidence type="ECO:0000305" key="8">
    <source>
    </source>
</evidence>
<evidence type="ECO:0007744" key="9">
    <source>
        <dbReference type="PDB" id="7PX8"/>
    </source>
</evidence>
<evidence type="ECO:0007829" key="10">
    <source>
        <dbReference type="PDB" id="7PX8"/>
    </source>
</evidence>
<evidence type="ECO:0007829" key="11">
    <source>
        <dbReference type="PDB" id="7QUN"/>
    </source>
</evidence>
<accession>P19205</accession>
<accession>Q9TS46</accession>
<feature type="chain" id="PRO_0000122432" description="Acylamino-acid-releasing enzyme">
    <location>
        <begin position="1"/>
        <end position="732"/>
    </location>
</feature>
<feature type="active site" description="Charge relay system" evidence="3 6">
    <location>
        <position position="587"/>
    </location>
</feature>
<feature type="active site" description="Charge relay system" evidence="3">
    <location>
        <position position="675"/>
    </location>
</feature>
<feature type="active site" description="Charge relay system" evidence="3">
    <location>
        <position position="707"/>
    </location>
</feature>
<feature type="modified residue" description="N-acetylmethionine" evidence="4 6">
    <location>
        <position position="1"/>
    </location>
</feature>
<feature type="modified residue" description="Phosphoserine" evidence="2">
    <location>
        <position position="187"/>
    </location>
</feature>
<feature type="sequence conflict" description="In Ref. 2; AA sequence." evidence="7" ref="2">
    <original>D</original>
    <variation>E</variation>
    <location>
        <position position="167"/>
    </location>
</feature>
<feature type="helix" evidence="11">
    <location>
        <begin position="10"/>
        <end position="20"/>
    </location>
</feature>
<feature type="strand" evidence="11">
    <location>
        <begin position="25"/>
        <end position="31"/>
    </location>
</feature>
<feature type="strand" evidence="10">
    <location>
        <begin position="38"/>
        <end position="40"/>
    </location>
</feature>
<feature type="strand" evidence="11">
    <location>
        <begin position="42"/>
        <end position="54"/>
    </location>
</feature>
<feature type="turn" evidence="11">
    <location>
        <begin position="55"/>
        <end position="58"/>
    </location>
</feature>
<feature type="strand" evidence="11">
    <location>
        <begin position="59"/>
        <end position="81"/>
    </location>
</feature>
<feature type="strand" evidence="11">
    <location>
        <begin position="86"/>
        <end position="88"/>
    </location>
</feature>
<feature type="strand" evidence="11">
    <location>
        <begin position="90"/>
        <end position="96"/>
    </location>
</feature>
<feature type="strand" evidence="11">
    <location>
        <begin position="103"/>
        <end position="109"/>
    </location>
</feature>
<feature type="strand" evidence="11">
    <location>
        <begin position="118"/>
        <end position="125"/>
    </location>
</feature>
<feature type="strand" evidence="11">
    <location>
        <begin position="128"/>
        <end position="134"/>
    </location>
</feature>
<feature type="helix" evidence="11">
    <location>
        <begin position="135"/>
        <end position="138"/>
    </location>
</feature>
<feature type="strand" evidence="11">
    <location>
        <begin position="140"/>
        <end position="142"/>
    </location>
</feature>
<feature type="strand" evidence="11">
    <location>
        <begin position="147"/>
        <end position="150"/>
    </location>
</feature>
<feature type="strand" evidence="11">
    <location>
        <begin position="153"/>
        <end position="155"/>
    </location>
</feature>
<feature type="strand" evidence="11">
    <location>
        <begin position="159"/>
        <end position="167"/>
    </location>
</feature>
<feature type="strand" evidence="10">
    <location>
        <begin position="201"/>
        <end position="203"/>
    </location>
</feature>
<feature type="strand" evidence="11">
    <location>
        <begin position="222"/>
        <end position="228"/>
    </location>
</feature>
<feature type="turn" evidence="11">
    <location>
        <begin position="229"/>
        <end position="231"/>
    </location>
</feature>
<feature type="strand" evidence="11">
    <location>
        <begin position="234"/>
        <end position="236"/>
    </location>
</feature>
<feature type="strand" evidence="11">
    <location>
        <begin position="244"/>
        <end position="251"/>
    </location>
</feature>
<feature type="helix" evidence="11">
    <location>
        <begin position="253"/>
        <end position="255"/>
    </location>
</feature>
<feature type="strand" evidence="11">
    <location>
        <begin position="256"/>
        <end position="264"/>
    </location>
</feature>
<feature type="strand" evidence="11">
    <location>
        <begin position="280"/>
        <end position="289"/>
    </location>
</feature>
<feature type="strand" evidence="11">
    <location>
        <begin position="292"/>
        <end position="294"/>
    </location>
</feature>
<feature type="strand" evidence="11">
    <location>
        <begin position="298"/>
        <end position="307"/>
    </location>
</feature>
<feature type="strand" evidence="11">
    <location>
        <begin position="311"/>
        <end position="319"/>
    </location>
</feature>
<feature type="strand" evidence="11">
    <location>
        <begin position="322"/>
        <end position="326"/>
    </location>
</feature>
<feature type="strand" evidence="11">
    <location>
        <begin position="329"/>
        <end position="335"/>
    </location>
</feature>
<feature type="turn" evidence="11">
    <location>
        <begin position="336"/>
        <end position="338"/>
    </location>
</feature>
<feature type="strand" evidence="11">
    <location>
        <begin position="341"/>
        <end position="345"/>
    </location>
</feature>
<feature type="turn" evidence="11">
    <location>
        <begin position="353"/>
        <end position="355"/>
    </location>
</feature>
<feature type="strand" evidence="11">
    <location>
        <begin position="373"/>
        <end position="382"/>
    </location>
</feature>
<feature type="strand" evidence="11">
    <location>
        <begin position="385"/>
        <end position="392"/>
    </location>
</feature>
<feature type="turn" evidence="11">
    <location>
        <begin position="393"/>
        <end position="395"/>
    </location>
</feature>
<feature type="strand" evidence="11">
    <location>
        <begin position="398"/>
        <end position="402"/>
    </location>
</feature>
<feature type="strand" evidence="11">
    <location>
        <begin position="404"/>
        <end position="406"/>
    </location>
</feature>
<feature type="strand" evidence="11">
    <location>
        <begin position="409"/>
        <end position="416"/>
    </location>
</feature>
<feature type="strand" evidence="11">
    <location>
        <begin position="419"/>
        <end position="426"/>
    </location>
</feature>
<feature type="strand" evidence="11">
    <location>
        <begin position="429"/>
        <end position="437"/>
    </location>
</feature>
<feature type="helix" evidence="11">
    <location>
        <begin position="444"/>
        <end position="446"/>
    </location>
</feature>
<feature type="strand" evidence="11">
    <location>
        <begin position="449"/>
        <end position="453"/>
    </location>
</feature>
<feature type="strand" evidence="11">
    <location>
        <begin position="461"/>
        <end position="468"/>
    </location>
</feature>
<feature type="helix" evidence="11">
    <location>
        <begin position="472"/>
        <end position="474"/>
    </location>
</feature>
<feature type="strand" evidence="11">
    <location>
        <begin position="477"/>
        <end position="479"/>
    </location>
</feature>
<feature type="strand" evidence="11">
    <location>
        <begin position="484"/>
        <end position="491"/>
    </location>
</feature>
<feature type="strand" evidence="11">
    <location>
        <begin position="502"/>
        <end position="506"/>
    </location>
</feature>
<feature type="strand" evidence="11">
    <location>
        <begin position="508"/>
        <end position="511"/>
    </location>
</feature>
<feature type="helix" evidence="11">
    <location>
        <begin position="520"/>
        <end position="527"/>
    </location>
</feature>
<feature type="strand" evidence="11">
    <location>
        <begin position="531"/>
        <end position="536"/>
    </location>
</feature>
<feature type="helix" evidence="11">
    <location>
        <begin position="545"/>
        <end position="550"/>
    </location>
</feature>
<feature type="strand" evidence="10">
    <location>
        <begin position="551"/>
        <end position="553"/>
    </location>
</feature>
<feature type="turn" evidence="11">
    <location>
        <begin position="555"/>
        <end position="557"/>
    </location>
</feature>
<feature type="helix" evidence="11">
    <location>
        <begin position="558"/>
        <end position="574"/>
    </location>
</feature>
<feature type="strand" evidence="11">
    <location>
        <begin position="580"/>
        <end position="586"/>
    </location>
</feature>
<feature type="helix" evidence="11">
    <location>
        <begin position="588"/>
        <end position="599"/>
    </location>
</feature>
<feature type="turn" evidence="11">
    <location>
        <begin position="601"/>
        <end position="603"/>
    </location>
</feature>
<feature type="strand" evidence="11">
    <location>
        <begin position="605"/>
        <end position="611"/>
    </location>
</feature>
<feature type="helix" evidence="11">
    <location>
        <begin position="616"/>
        <end position="620"/>
    </location>
</feature>
<feature type="helix" evidence="11">
    <location>
        <begin position="626"/>
        <end position="633"/>
    </location>
</feature>
<feature type="helix" evidence="11">
    <location>
        <begin position="645"/>
        <end position="653"/>
    </location>
</feature>
<feature type="helix" evidence="11">
    <location>
        <begin position="656"/>
        <end position="662"/>
    </location>
</feature>
<feature type="strand" evidence="11">
    <location>
        <begin position="667"/>
        <end position="672"/>
    </location>
</feature>
<feature type="strand" evidence="11">
    <location>
        <begin position="676"/>
        <end position="678"/>
    </location>
</feature>
<feature type="helix" evidence="11">
    <location>
        <begin position="681"/>
        <end position="691"/>
    </location>
</feature>
<feature type="turn" evidence="11">
    <location>
        <begin position="692"/>
        <end position="694"/>
    </location>
</feature>
<feature type="strand" evidence="11">
    <location>
        <begin position="697"/>
        <end position="702"/>
    </location>
</feature>
<feature type="helix" evidence="11">
    <location>
        <begin position="712"/>
        <end position="729"/>
    </location>
</feature>
<organism>
    <name type="scientific">Sus scrofa</name>
    <name type="common">Pig</name>
    <dbReference type="NCBI Taxonomy" id="9823"/>
    <lineage>
        <taxon>Eukaryota</taxon>
        <taxon>Metazoa</taxon>
        <taxon>Chordata</taxon>
        <taxon>Craniata</taxon>
        <taxon>Vertebrata</taxon>
        <taxon>Euteleostomi</taxon>
        <taxon>Mammalia</taxon>
        <taxon>Eutheria</taxon>
        <taxon>Laurasiatheria</taxon>
        <taxon>Artiodactyla</taxon>
        <taxon>Suina</taxon>
        <taxon>Suidae</taxon>
        <taxon>Sus</taxon>
    </lineage>
</organism>
<keyword id="KW-0002">3D-structure</keyword>
<keyword id="KW-0007">Acetylation</keyword>
<keyword id="KW-0963">Cytoplasm</keyword>
<keyword id="KW-0903">Direct protein sequencing</keyword>
<keyword id="KW-0378">Hydrolase</keyword>
<keyword id="KW-0597">Phosphoprotein</keyword>
<keyword id="KW-1185">Reference proteome</keyword>
<protein>
    <recommendedName>
        <fullName>Acylamino-acid-releasing enzyme</fullName>
        <shortName>AARE</shortName>
        <ecNumber evidence="1">3.4.19.1</ecNumber>
    </recommendedName>
    <alternativeName>
        <fullName>Acyl-peptide hydrolase</fullName>
        <shortName>APH</shortName>
    </alternativeName>
    <alternativeName>
        <fullName>Acylaminoacyl-peptidase</fullName>
    </alternativeName>
</protein>
<proteinExistence type="evidence at protein level"/>
<reference key="1">
    <citation type="journal article" date="1989" name="J. Biochem.">
        <title>The primary structure of porcine liver acylamino acid-releasing enzyme deduced from cDNA sequences.</title>
        <authorList>
            <person name="Mitta M."/>
            <person name="Asada K."/>
            <person name="Uchimura Y."/>
            <person name="Kimizuka F."/>
            <person name="Kato I."/>
            <person name="Sakiyama F."/>
            <person name="Tsunasawa S."/>
        </authorList>
    </citation>
    <scope>NUCLEOTIDE SEQUENCE [MRNA]</scope>
    <scope>PARTIAL PROTEIN SEQUENCE</scope>
    <scope>ACETYLATION AT MET-1</scope>
    <source>
        <tissue>Liver</tissue>
    </source>
</reference>
<reference key="2">
    <citation type="journal article" date="1995" name="J. Biochem.">
        <title>Complete covalent structure of porcine liver acylamino acid-releasing enzyme and identification of its active site serine residue.</title>
        <authorList>
            <person name="Miyagi M."/>
            <person name="Sakiyama F."/>
            <person name="Kato I."/>
            <person name="Tsunasawa S."/>
        </authorList>
    </citation>
    <scope>PROTEIN SEQUENCE</scope>
    <scope>ACETYLATION AT MET-1</scope>
    <scope>IDENTIFICATION BY MASS SPECTROMETRY</scope>
    <scope>ACTIVE SITE SER-587</scope>
    <source>
        <tissue>Liver</tissue>
    </source>
</reference>
<reference evidence="9" key="3">
    <citation type="journal article" date="2022" name="Chem. Sci.">
        <title>Cryo-EM structure of acylpeptide hydrolase reveals substrate selection by multimerization and a multi-state serine-protease triad.</title>
        <authorList>
            <person name="Kiss-Szeman A.J."/>
            <person name="Straner P."/>
            <person name="Jakli I."/>
            <person name="Hosogi N."/>
            <person name="Harmat V."/>
            <person name="Menyhard D.K."/>
            <person name="Perczel A."/>
        </authorList>
    </citation>
    <scope>STRUCTURE BY ELECTRON MICROSCOPY (3.27 ANGSTROMS)</scope>
    <scope>SUBUNIT</scope>
    <scope>TISSUE SPECIFICITY</scope>
</reference>
<dbReference type="EC" id="3.4.19.1" evidence="1"/>
<dbReference type="EMBL" id="D00524">
    <property type="protein sequence ID" value="BAA00411.1"/>
    <property type="molecule type" value="mRNA"/>
</dbReference>
<dbReference type="PIR" id="JU0132">
    <property type="entry name" value="JU0132"/>
</dbReference>
<dbReference type="RefSeq" id="NP_999088.1">
    <property type="nucleotide sequence ID" value="NM_213923.1"/>
</dbReference>
<dbReference type="PDB" id="7PX8">
    <property type="method" value="EM"/>
    <property type="resolution" value="3.27 A"/>
    <property type="chains" value="A/B/C/D=1-732"/>
</dbReference>
<dbReference type="PDB" id="7QUN">
    <property type="method" value="EM"/>
    <property type="resolution" value="2.10 A"/>
    <property type="chains" value="A/B/C/D=1-732"/>
</dbReference>
<dbReference type="PDBsum" id="7PX8"/>
<dbReference type="PDBsum" id="7QUN"/>
<dbReference type="EMDB" id="EMD-13691"/>
<dbReference type="EMDB" id="EMD-14149"/>
<dbReference type="SMR" id="P19205"/>
<dbReference type="FunCoup" id="P19205">
    <property type="interactions" value="2451"/>
</dbReference>
<dbReference type="STRING" id="9823.ENSSSCP00000022971"/>
<dbReference type="BindingDB" id="P19205"/>
<dbReference type="ChEMBL" id="CHEMBL2021757"/>
<dbReference type="ESTHER" id="pig-acph">
    <property type="family name" value="ACPH_Peptidase_S9"/>
</dbReference>
<dbReference type="MEROPS" id="S09.004"/>
<dbReference type="iPTMnet" id="P19205"/>
<dbReference type="PaxDb" id="9823-ENSSSCP00000012138"/>
<dbReference type="PeptideAtlas" id="P19205"/>
<dbReference type="GeneID" id="396961"/>
<dbReference type="KEGG" id="ssc:396961"/>
<dbReference type="CTD" id="327"/>
<dbReference type="eggNOG" id="KOG2100">
    <property type="taxonomic scope" value="Eukaryota"/>
</dbReference>
<dbReference type="InParanoid" id="P19205"/>
<dbReference type="OrthoDB" id="416344at2759"/>
<dbReference type="PRO" id="PR:P19205"/>
<dbReference type="Proteomes" id="UP000008227">
    <property type="component" value="Unplaced"/>
</dbReference>
<dbReference type="Proteomes" id="UP000314985">
    <property type="component" value="Unplaced"/>
</dbReference>
<dbReference type="Proteomes" id="UP000694570">
    <property type="component" value="Unplaced"/>
</dbReference>
<dbReference type="Proteomes" id="UP000694571">
    <property type="component" value="Unplaced"/>
</dbReference>
<dbReference type="Proteomes" id="UP000694720">
    <property type="component" value="Unplaced"/>
</dbReference>
<dbReference type="Proteomes" id="UP000694722">
    <property type="component" value="Unplaced"/>
</dbReference>
<dbReference type="Proteomes" id="UP000694723">
    <property type="component" value="Unplaced"/>
</dbReference>
<dbReference type="Proteomes" id="UP000694724">
    <property type="component" value="Unplaced"/>
</dbReference>
<dbReference type="Proteomes" id="UP000694725">
    <property type="component" value="Unplaced"/>
</dbReference>
<dbReference type="Proteomes" id="UP000694726">
    <property type="component" value="Unplaced"/>
</dbReference>
<dbReference type="Proteomes" id="UP000694727">
    <property type="component" value="Unplaced"/>
</dbReference>
<dbReference type="Proteomes" id="UP000694728">
    <property type="component" value="Unplaced"/>
</dbReference>
<dbReference type="GO" id="GO:0005737">
    <property type="term" value="C:cytoplasm"/>
    <property type="evidence" value="ECO:0007669"/>
    <property type="project" value="UniProtKB-SubCell"/>
</dbReference>
<dbReference type="GO" id="GO:0008242">
    <property type="term" value="F:omega peptidase activity"/>
    <property type="evidence" value="ECO:0007669"/>
    <property type="project" value="UniProtKB-EC"/>
</dbReference>
<dbReference type="GO" id="GO:0004252">
    <property type="term" value="F:serine-type endopeptidase activity"/>
    <property type="evidence" value="ECO:0000318"/>
    <property type="project" value="GO_Central"/>
</dbReference>
<dbReference type="GO" id="GO:0006508">
    <property type="term" value="P:proteolysis"/>
    <property type="evidence" value="ECO:0007669"/>
    <property type="project" value="InterPro"/>
</dbReference>
<dbReference type="FunFam" id="2.120.10.30:FF:000047">
    <property type="entry name" value="Acylamino-acid-releasing enzyme"/>
    <property type="match status" value="1"/>
</dbReference>
<dbReference type="FunFam" id="3.40.50.1820:FF:000043">
    <property type="entry name" value="acylamino-acid-releasing enzyme"/>
    <property type="match status" value="1"/>
</dbReference>
<dbReference type="Gene3D" id="3.40.50.1820">
    <property type="entry name" value="alpha/beta hydrolase"/>
    <property type="match status" value="1"/>
</dbReference>
<dbReference type="Gene3D" id="2.120.10.30">
    <property type="entry name" value="TolB, C-terminal domain"/>
    <property type="match status" value="1"/>
</dbReference>
<dbReference type="InterPro" id="IPR011042">
    <property type="entry name" value="6-blade_b-propeller_TolB-like"/>
</dbReference>
<dbReference type="InterPro" id="IPR045550">
    <property type="entry name" value="AARE_N"/>
</dbReference>
<dbReference type="InterPro" id="IPR029058">
    <property type="entry name" value="AB_hydrolase_fold"/>
</dbReference>
<dbReference type="InterPro" id="IPR002471">
    <property type="entry name" value="Pept_S9_AS"/>
</dbReference>
<dbReference type="InterPro" id="IPR001375">
    <property type="entry name" value="Peptidase_S9_cat"/>
</dbReference>
<dbReference type="PANTHER" id="PTHR42776:SF4">
    <property type="entry name" value="ACYLAMINO-ACID-RELEASING ENZYME"/>
    <property type="match status" value="1"/>
</dbReference>
<dbReference type="PANTHER" id="PTHR42776">
    <property type="entry name" value="SERINE PEPTIDASE S9 FAMILY MEMBER"/>
    <property type="match status" value="1"/>
</dbReference>
<dbReference type="Pfam" id="PF19283">
    <property type="entry name" value="APEH_N"/>
    <property type="match status" value="1"/>
</dbReference>
<dbReference type="Pfam" id="PF00326">
    <property type="entry name" value="Peptidase_S9"/>
    <property type="match status" value="1"/>
</dbReference>
<dbReference type="SUPFAM" id="SSF53474">
    <property type="entry name" value="alpha/beta-Hydrolases"/>
    <property type="match status" value="1"/>
</dbReference>
<dbReference type="SUPFAM" id="SSF50993">
    <property type="entry name" value="Peptidase/esterase 'gauge' domain"/>
    <property type="match status" value="1"/>
</dbReference>
<dbReference type="PROSITE" id="PS00708">
    <property type="entry name" value="PRO_ENDOPEP_SER"/>
    <property type="match status" value="1"/>
</dbReference>